<sequence length="385" mass="42084">MSWQQRVDDALTARRATDTLRRRYVVSQGAGRWLVANGRQYLNFSSNDYLGLSQHPQIIRAWQQAATRFGVGSGGSGHISGYSVAHQALEVELAQWLEYPRALLFISGFAANQAVITALMKKNDRIVADRLSHASLLEAANLSPAQLRRFIHNDTQHLSRLLQSPCVGQQLVVTEGVYSMDGDSAPLAEIQHIARRHHAWLLVDDAHGIGVTGDEGRGTCWQRGVKPELLVVTFGKGFGVSGAAVLCSESVADYLLQFARHLVYSTSMPPAQAQALSASLAVIRSDEGRERREKLAALVQRFRAGVNASRFTLLNAHSAIQPLIVGDNSRALRLAEALRQQGCWATAIRPPTVPVGTARLRLTLTQAHEACDIDRLLEVLHGAGE</sequence>
<comment type="function">
    <text evidence="1">Catalyzes the decarboxylative condensation of pimeloyl-[acyl-carrier protein] and L-alanine to produce 8-amino-7-oxononanoate (AON), [acyl-carrier protein], and carbon dioxide.</text>
</comment>
<comment type="catalytic activity">
    <reaction evidence="1">
        <text>6-carboxyhexanoyl-[ACP] + L-alanine + H(+) = (8S)-8-amino-7-oxononanoate + holo-[ACP] + CO2</text>
        <dbReference type="Rhea" id="RHEA:42288"/>
        <dbReference type="Rhea" id="RHEA-COMP:9685"/>
        <dbReference type="Rhea" id="RHEA-COMP:9955"/>
        <dbReference type="ChEBI" id="CHEBI:15378"/>
        <dbReference type="ChEBI" id="CHEBI:16526"/>
        <dbReference type="ChEBI" id="CHEBI:57972"/>
        <dbReference type="ChEBI" id="CHEBI:64479"/>
        <dbReference type="ChEBI" id="CHEBI:78846"/>
        <dbReference type="ChEBI" id="CHEBI:149468"/>
        <dbReference type="EC" id="2.3.1.47"/>
    </reaction>
</comment>
<comment type="cofactor">
    <cofactor evidence="1">
        <name>pyridoxal 5'-phosphate</name>
        <dbReference type="ChEBI" id="CHEBI:597326"/>
    </cofactor>
</comment>
<comment type="pathway">
    <text evidence="1">Cofactor biosynthesis; biotin biosynthesis.</text>
</comment>
<comment type="subunit">
    <text evidence="1">Homodimer.</text>
</comment>
<comment type="similarity">
    <text evidence="1">Belongs to the class-II pyridoxal-phosphate-dependent aminotransferase family. BioF subfamily.</text>
</comment>
<feature type="chain" id="PRO_0000381099" description="8-amino-7-oxononanoate synthase">
    <location>
        <begin position="1"/>
        <end position="385"/>
    </location>
</feature>
<feature type="binding site" evidence="1">
    <location>
        <position position="21"/>
    </location>
    <ligand>
        <name>substrate</name>
    </ligand>
</feature>
<feature type="binding site" evidence="1">
    <location>
        <begin position="108"/>
        <end position="109"/>
    </location>
    <ligand>
        <name>pyridoxal 5'-phosphate</name>
        <dbReference type="ChEBI" id="CHEBI:597326"/>
    </ligand>
</feature>
<feature type="binding site" evidence="1">
    <location>
        <position position="133"/>
    </location>
    <ligand>
        <name>substrate</name>
    </ligand>
</feature>
<feature type="binding site" evidence="1">
    <location>
        <position position="179"/>
    </location>
    <ligand>
        <name>pyridoxal 5'-phosphate</name>
        <dbReference type="ChEBI" id="CHEBI:597326"/>
    </ligand>
</feature>
<feature type="binding site" evidence="1">
    <location>
        <position position="207"/>
    </location>
    <ligand>
        <name>pyridoxal 5'-phosphate</name>
        <dbReference type="ChEBI" id="CHEBI:597326"/>
    </ligand>
</feature>
<feature type="binding site" evidence="1">
    <location>
        <position position="233"/>
    </location>
    <ligand>
        <name>pyridoxal 5'-phosphate</name>
        <dbReference type="ChEBI" id="CHEBI:597326"/>
    </ligand>
</feature>
<feature type="binding site" evidence="1">
    <location>
        <position position="352"/>
    </location>
    <ligand>
        <name>substrate</name>
    </ligand>
</feature>
<feature type="modified residue" description="N6-(pyridoxal phosphate)lysine" evidence="1">
    <location>
        <position position="236"/>
    </location>
</feature>
<accession>B4SZJ8</accession>
<proteinExistence type="inferred from homology"/>
<gene>
    <name evidence="1" type="primary">bioF</name>
    <name type="ordered locus">SNSL254_A0859</name>
</gene>
<keyword id="KW-0093">Biotin biosynthesis</keyword>
<keyword id="KW-0663">Pyridoxal phosphate</keyword>
<keyword id="KW-0808">Transferase</keyword>
<dbReference type="EC" id="2.3.1.47" evidence="1"/>
<dbReference type="EMBL" id="CP001113">
    <property type="protein sequence ID" value="ACF65404.1"/>
    <property type="molecule type" value="Genomic_DNA"/>
</dbReference>
<dbReference type="RefSeq" id="WP_000118945.1">
    <property type="nucleotide sequence ID" value="NZ_CCMR01000003.1"/>
</dbReference>
<dbReference type="SMR" id="B4SZJ8"/>
<dbReference type="KEGG" id="see:SNSL254_A0859"/>
<dbReference type="HOGENOM" id="CLU_015846_11_2_6"/>
<dbReference type="UniPathway" id="UPA00078"/>
<dbReference type="Proteomes" id="UP000008824">
    <property type="component" value="Chromosome"/>
</dbReference>
<dbReference type="GO" id="GO:0008710">
    <property type="term" value="F:8-amino-7-oxononanoate synthase activity"/>
    <property type="evidence" value="ECO:0007669"/>
    <property type="project" value="UniProtKB-UniRule"/>
</dbReference>
<dbReference type="GO" id="GO:0030170">
    <property type="term" value="F:pyridoxal phosphate binding"/>
    <property type="evidence" value="ECO:0007669"/>
    <property type="project" value="UniProtKB-UniRule"/>
</dbReference>
<dbReference type="GO" id="GO:0009102">
    <property type="term" value="P:biotin biosynthetic process"/>
    <property type="evidence" value="ECO:0007669"/>
    <property type="project" value="UniProtKB-UniRule"/>
</dbReference>
<dbReference type="CDD" id="cd06454">
    <property type="entry name" value="KBL_like"/>
    <property type="match status" value="1"/>
</dbReference>
<dbReference type="FunFam" id="3.40.640.10:FF:000095">
    <property type="entry name" value="8-amino-7-oxononanoate synthase"/>
    <property type="match status" value="1"/>
</dbReference>
<dbReference type="Gene3D" id="3.90.1150.10">
    <property type="entry name" value="Aspartate Aminotransferase, domain 1"/>
    <property type="match status" value="1"/>
</dbReference>
<dbReference type="Gene3D" id="3.40.640.10">
    <property type="entry name" value="Type I PLP-dependent aspartate aminotransferase-like (Major domain)"/>
    <property type="match status" value="1"/>
</dbReference>
<dbReference type="HAMAP" id="MF_01693">
    <property type="entry name" value="BioF_aminotrans_2"/>
    <property type="match status" value="1"/>
</dbReference>
<dbReference type="InterPro" id="IPR001917">
    <property type="entry name" value="Aminotrans_II_pyridoxalP_BS"/>
</dbReference>
<dbReference type="InterPro" id="IPR004839">
    <property type="entry name" value="Aminotransferase_I/II_large"/>
</dbReference>
<dbReference type="InterPro" id="IPR050087">
    <property type="entry name" value="AON_synthase_class-II"/>
</dbReference>
<dbReference type="InterPro" id="IPR004723">
    <property type="entry name" value="AONS_Archaea/Proteobacteria"/>
</dbReference>
<dbReference type="InterPro" id="IPR022834">
    <property type="entry name" value="AONS_Proteobacteria"/>
</dbReference>
<dbReference type="InterPro" id="IPR015424">
    <property type="entry name" value="PyrdxlP-dep_Trfase"/>
</dbReference>
<dbReference type="InterPro" id="IPR015421">
    <property type="entry name" value="PyrdxlP-dep_Trfase_major"/>
</dbReference>
<dbReference type="InterPro" id="IPR015422">
    <property type="entry name" value="PyrdxlP-dep_Trfase_small"/>
</dbReference>
<dbReference type="NCBIfam" id="TIGR00858">
    <property type="entry name" value="bioF"/>
    <property type="match status" value="1"/>
</dbReference>
<dbReference type="PANTHER" id="PTHR13693:SF100">
    <property type="entry name" value="8-AMINO-7-OXONONANOATE SYNTHASE"/>
    <property type="match status" value="1"/>
</dbReference>
<dbReference type="PANTHER" id="PTHR13693">
    <property type="entry name" value="CLASS II AMINOTRANSFERASE/8-AMINO-7-OXONONANOATE SYNTHASE"/>
    <property type="match status" value="1"/>
</dbReference>
<dbReference type="Pfam" id="PF00155">
    <property type="entry name" value="Aminotran_1_2"/>
    <property type="match status" value="1"/>
</dbReference>
<dbReference type="SUPFAM" id="SSF53383">
    <property type="entry name" value="PLP-dependent transferases"/>
    <property type="match status" value="1"/>
</dbReference>
<dbReference type="PROSITE" id="PS00599">
    <property type="entry name" value="AA_TRANSFER_CLASS_2"/>
    <property type="match status" value="1"/>
</dbReference>
<name>BIOF_SALNS</name>
<organism>
    <name type="scientific">Salmonella newport (strain SL254)</name>
    <dbReference type="NCBI Taxonomy" id="423368"/>
    <lineage>
        <taxon>Bacteria</taxon>
        <taxon>Pseudomonadati</taxon>
        <taxon>Pseudomonadota</taxon>
        <taxon>Gammaproteobacteria</taxon>
        <taxon>Enterobacterales</taxon>
        <taxon>Enterobacteriaceae</taxon>
        <taxon>Salmonella</taxon>
    </lineage>
</organism>
<evidence type="ECO:0000255" key="1">
    <source>
        <dbReference type="HAMAP-Rule" id="MF_01693"/>
    </source>
</evidence>
<reference key="1">
    <citation type="journal article" date="2011" name="J. Bacteriol.">
        <title>Comparative genomics of 28 Salmonella enterica isolates: evidence for CRISPR-mediated adaptive sublineage evolution.</title>
        <authorList>
            <person name="Fricke W.F."/>
            <person name="Mammel M.K."/>
            <person name="McDermott P.F."/>
            <person name="Tartera C."/>
            <person name="White D.G."/>
            <person name="Leclerc J.E."/>
            <person name="Ravel J."/>
            <person name="Cebula T.A."/>
        </authorList>
    </citation>
    <scope>NUCLEOTIDE SEQUENCE [LARGE SCALE GENOMIC DNA]</scope>
    <source>
        <strain>SL254</strain>
    </source>
</reference>
<protein>
    <recommendedName>
        <fullName evidence="1">8-amino-7-oxononanoate synthase</fullName>
        <shortName evidence="1">AONS</shortName>
        <ecNumber evidence="1">2.3.1.47</ecNumber>
    </recommendedName>
    <alternativeName>
        <fullName evidence="1">7-keto-8-amino-pelargonic acid synthase</fullName>
        <shortName evidence="1">7-KAP synthase</shortName>
        <shortName evidence="1">KAPA synthase</shortName>
    </alternativeName>
    <alternativeName>
        <fullName evidence="1">8-amino-7-ketopelargonate synthase</fullName>
    </alternativeName>
</protein>